<sequence length="979" mass="110825">MSGPASSTGFHIHAEGLHERNVQPSKPTSDGGVAPKALDDKSRVEEDERTDSEKKTFGRTPGGTIFTVPPTRDMVSQLLSPSEPKNLSDIFVLAIISCHIFLLRFLPSSFRVAAFAIIFLFWRAAYNIGIGWLLHMQSNGRTLVCWAKKSNIFVNPSTGRNPHPVLYNLLKWELETKIPEQYSFEDAPTEYNTWLVFRRVVDLILMCDFTSYCLFAIACGGRPAGEGFIMLALRWITGMSLVLFNLWVKLDAHRVVKDFAWYWGDFFYLIDQDLTFDGVFEMAPHPMYSVGYAGYYGISLMAASYKLLFISILAHAAQFAFLVLVENPHIEKTYNAPPPRKRVAVDTDNVKPQDDDVSQDSSVINDNEYSGKAVATLEPSSMHNLLGPHNFDLYRITDSSVLLIQILFSALAILTPSTPVYQFFFVLNAALWRVWYSVGIGYILNRQSHCKMWTRHFVKYGESNQEAWQQWKGTYHLSMTMTYASFIAATWKMYSFPQDWGYGLVLLRHILGASLIALQIWTSASIYESLGEFGWFFGDFFFDQSPKLTYSGIYRYLNNPERVLGLAGVWGAVLITSTKSVISLALLSHTLTIAFIQLVERPHMQKLYGQSLRRDAGLVRSLKRSLPPSLKQFHGSVDKILDDSIEFIEEFIEAARPKLAAGVKTFVKDTSALFQKYPARITISRLEPDLAGYDQKDYSISLEGTQSSEPAQFERASDKEGEKARSMPDRRGEQVNLMFEYGAPIKVKWTAPLNHSKKDWIGLYMVTDNTSREITRISSQGRWIGTNKASFDSLTCEQGLISSDIVINKFREDGEPKDVASGEMVFSGDKLWWTQGVFEFRYHHNGKHNVMAVSRPFEIRIGRFDDDAIYGDRYGLVRAAIESALLPVVQNCFDRDPDIAPQTVEEQYGSLVDRNGKYSRRVVFAVHQMFGIEFAPEVVRADGNVRNLAWRICNAKKVLAPYSMSRTNGATTPTAEHES</sequence>
<organism>
    <name type="scientific">Paracoccidioides lutzii (strain ATCC MYA-826 / Pb01)</name>
    <name type="common">Paracoccidioides brasiliensis</name>
    <dbReference type="NCBI Taxonomy" id="502779"/>
    <lineage>
        <taxon>Eukaryota</taxon>
        <taxon>Fungi</taxon>
        <taxon>Dikarya</taxon>
        <taxon>Ascomycota</taxon>
        <taxon>Pezizomycotina</taxon>
        <taxon>Eurotiomycetes</taxon>
        <taxon>Eurotiomycetidae</taxon>
        <taxon>Onygenales</taxon>
        <taxon>Ajellomycetaceae</taxon>
        <taxon>Paracoccidioides</taxon>
    </lineage>
</organism>
<proteinExistence type="inferred from homology"/>
<evidence type="ECO:0000255" key="1">
    <source>
        <dbReference type="HAMAP-Rule" id="MF_03217"/>
    </source>
</evidence>
<evidence type="ECO:0000256" key="2">
    <source>
        <dbReference type="SAM" id="MobiDB-lite"/>
    </source>
</evidence>
<feature type="chain" id="PRO_0000405901" description="Phosphatidylethanolamine N-methyltransferase">
    <location>
        <begin position="1"/>
        <end position="979"/>
    </location>
</feature>
<feature type="topological domain" description="Lumenal" evidence="1">
    <location>
        <begin position="1"/>
        <end position="89"/>
    </location>
</feature>
<feature type="transmembrane region" description="Helical" evidence="1">
    <location>
        <begin position="90"/>
        <end position="110"/>
    </location>
</feature>
<feature type="topological domain" description="Cytoplasmic" evidence="1">
    <location>
        <begin position="111"/>
        <end position="113"/>
    </location>
</feature>
<feature type="transmembrane region" description="Helical" evidence="1">
    <location>
        <begin position="114"/>
        <end position="134"/>
    </location>
</feature>
<feature type="topological domain" description="Lumenal" evidence="1">
    <location>
        <begin position="135"/>
        <end position="199"/>
    </location>
</feature>
<feature type="transmembrane region" description="Helical" evidence="1">
    <location>
        <begin position="200"/>
        <end position="220"/>
    </location>
</feature>
<feature type="topological domain" description="Cytoplasmic" evidence="1">
    <location>
        <begin position="221"/>
        <end position="227"/>
    </location>
</feature>
<feature type="transmembrane region" description="Helical" evidence="1">
    <location>
        <begin position="228"/>
        <end position="248"/>
    </location>
</feature>
<feature type="topological domain" description="Lumenal" evidence="1">
    <location>
        <begin position="249"/>
        <end position="281"/>
    </location>
</feature>
<feature type="transmembrane region" description="Helical" evidence="1">
    <location>
        <begin position="282"/>
        <end position="302"/>
    </location>
</feature>
<feature type="topological domain" description="Cytoplasmic" evidence="1">
    <location>
        <begin position="303"/>
        <end position="304"/>
    </location>
</feature>
<feature type="transmembrane region" description="Helical" evidence="1">
    <location>
        <begin position="305"/>
        <end position="325"/>
    </location>
</feature>
<feature type="topological domain" description="Lumenal" evidence="1">
    <location>
        <begin position="326"/>
        <end position="398"/>
    </location>
</feature>
<feature type="transmembrane region" description="Helical" evidence="1">
    <location>
        <begin position="399"/>
        <end position="418"/>
    </location>
</feature>
<feature type="topological domain" description="Cytoplasmic" evidence="1">
    <location>
        <begin position="419"/>
        <end position="422"/>
    </location>
</feature>
<feature type="transmembrane region" description="Helical" evidence="1">
    <location>
        <begin position="423"/>
        <end position="445"/>
    </location>
</feature>
<feature type="topological domain" description="Lumenal" evidence="1">
    <location>
        <begin position="446"/>
        <end position="474"/>
    </location>
</feature>
<feature type="transmembrane region" description="Helical" evidence="1">
    <location>
        <begin position="475"/>
        <end position="494"/>
    </location>
</feature>
<feature type="topological domain" description="Cytoplasmic" evidence="1">
    <location>
        <begin position="495"/>
        <end position="499"/>
    </location>
</feature>
<feature type="transmembrane region" description="Helical" evidence="1">
    <location>
        <begin position="500"/>
        <end position="520"/>
    </location>
</feature>
<feature type="topological domain" description="Lumenal" evidence="1">
    <location>
        <begin position="521"/>
        <end position="565"/>
    </location>
</feature>
<feature type="transmembrane region" description="Helical" evidence="1">
    <location>
        <begin position="566"/>
        <end position="586"/>
    </location>
</feature>
<feature type="topological domain" description="Cytoplasmic" evidence="1">
    <location>
        <begin position="587"/>
        <end position="979"/>
    </location>
</feature>
<feature type="region of interest" description="Disordered" evidence="2">
    <location>
        <begin position="1"/>
        <end position="63"/>
    </location>
</feature>
<feature type="region of interest" description="Disordered" evidence="2">
    <location>
        <begin position="335"/>
        <end position="362"/>
    </location>
</feature>
<feature type="region of interest" description="Disordered" evidence="2">
    <location>
        <begin position="704"/>
        <end position="729"/>
    </location>
</feature>
<feature type="compositionally biased region" description="Basic and acidic residues" evidence="2">
    <location>
        <begin position="12"/>
        <end position="21"/>
    </location>
</feature>
<feature type="compositionally biased region" description="Basic and acidic residues" evidence="2">
    <location>
        <begin position="37"/>
        <end position="56"/>
    </location>
</feature>
<feature type="compositionally biased region" description="Basic and acidic residues" evidence="2">
    <location>
        <begin position="343"/>
        <end position="354"/>
    </location>
</feature>
<feature type="compositionally biased region" description="Basic and acidic residues" evidence="2">
    <location>
        <begin position="715"/>
        <end position="729"/>
    </location>
</feature>
<name>CHO2_PARBA</name>
<protein>
    <recommendedName>
        <fullName evidence="1">Phosphatidylethanolamine N-methyltransferase</fullName>
        <shortName evidence="1">PE methyltransferase</shortName>
        <shortName evidence="1">PEAMT</shortName>
        <shortName evidence="1">PEMT</shortName>
        <ecNumber evidence="1">2.1.1.17</ecNumber>
    </recommendedName>
</protein>
<reference key="1">
    <citation type="journal article" date="2011" name="PLoS Genet.">
        <title>Comparative genomic analysis of human fungal pathogens causing paracoccidioidomycosis.</title>
        <authorList>
            <person name="Desjardins C.A."/>
            <person name="Champion M.D."/>
            <person name="Holder J.W."/>
            <person name="Muszewska A."/>
            <person name="Goldberg J."/>
            <person name="Bailao A.M."/>
            <person name="Brigido M.M."/>
            <person name="Ferreira M.E."/>
            <person name="Garcia A.M."/>
            <person name="Grynberg M."/>
            <person name="Gujja S."/>
            <person name="Heiman D.I."/>
            <person name="Henn M.R."/>
            <person name="Kodira C.D."/>
            <person name="Leon-Narvaez H."/>
            <person name="Longo L.V.G."/>
            <person name="Ma L.-J."/>
            <person name="Malavazi I."/>
            <person name="Matsuo A.L."/>
            <person name="Morais F.V."/>
            <person name="Pereira M."/>
            <person name="Rodriguez-Brito S."/>
            <person name="Sakthikumar S."/>
            <person name="Salem-Izacc S.M."/>
            <person name="Sykes S.M."/>
            <person name="Teixeira M.M."/>
            <person name="Vallejo M.C."/>
            <person name="Walter M.E."/>
            <person name="Yandava C."/>
            <person name="Young S."/>
            <person name="Zeng Q."/>
            <person name="Zucker J."/>
            <person name="Felipe M.S."/>
            <person name="Goldman G.H."/>
            <person name="Haas B.J."/>
            <person name="McEwen J.G."/>
            <person name="Nino-Vega G."/>
            <person name="Puccia R."/>
            <person name="San-Blas G."/>
            <person name="Soares C.M."/>
            <person name="Birren B.W."/>
            <person name="Cuomo C.A."/>
        </authorList>
    </citation>
    <scope>NUCLEOTIDE SEQUENCE [LARGE SCALE GENOMIC DNA]</scope>
    <source>
        <strain>ATCC MYA-826 / Pb01</strain>
    </source>
</reference>
<gene>
    <name type="primary">CHO2</name>
    <name type="ORF">PAAG_03945</name>
</gene>
<dbReference type="EC" id="2.1.1.17" evidence="1"/>
<dbReference type="EMBL" id="KN294000">
    <property type="protein sequence ID" value="EEH42024.2"/>
    <property type="molecule type" value="Genomic_DNA"/>
</dbReference>
<dbReference type="RefSeq" id="XP_002794352.2">
    <property type="nucleotide sequence ID" value="XM_002794306.2"/>
</dbReference>
<dbReference type="SMR" id="C1GZK1"/>
<dbReference type="STRING" id="502779.C1GZK1"/>
<dbReference type="GeneID" id="9097550"/>
<dbReference type="KEGG" id="pbl:PAAG_03945"/>
<dbReference type="VEuPathDB" id="FungiDB:PAAG_03945"/>
<dbReference type="eggNOG" id="ENOG502QRGH">
    <property type="taxonomic scope" value="Eukaryota"/>
</dbReference>
<dbReference type="HOGENOM" id="CLU_005987_0_0_1"/>
<dbReference type="OMA" id="RIWYSVG"/>
<dbReference type="OrthoDB" id="4583at2759"/>
<dbReference type="UniPathway" id="UPA00753"/>
<dbReference type="Proteomes" id="UP000002059">
    <property type="component" value="Partially assembled WGS sequence"/>
</dbReference>
<dbReference type="GO" id="GO:0005789">
    <property type="term" value="C:endoplasmic reticulum membrane"/>
    <property type="evidence" value="ECO:0007669"/>
    <property type="project" value="UniProtKB-SubCell"/>
</dbReference>
<dbReference type="GO" id="GO:0004608">
    <property type="term" value="F:phosphatidylethanolamine N-methyltransferase activity"/>
    <property type="evidence" value="ECO:0007669"/>
    <property type="project" value="UniProtKB-UniRule"/>
</dbReference>
<dbReference type="GO" id="GO:0032259">
    <property type="term" value="P:methylation"/>
    <property type="evidence" value="ECO:0007669"/>
    <property type="project" value="UniProtKB-KW"/>
</dbReference>
<dbReference type="GO" id="GO:0006656">
    <property type="term" value="P:phosphatidylcholine biosynthetic process"/>
    <property type="evidence" value="ECO:0007669"/>
    <property type="project" value="UniProtKB-UniRule"/>
</dbReference>
<dbReference type="FunFam" id="2.60.40.2840:FF:000006">
    <property type="entry name" value="Phosphatidylethanolamine N-methyltransferase"/>
    <property type="match status" value="1"/>
</dbReference>
<dbReference type="Gene3D" id="2.60.40.2840">
    <property type="match status" value="1"/>
</dbReference>
<dbReference type="HAMAP" id="MF_03217">
    <property type="entry name" value="PEMT"/>
    <property type="match status" value="1"/>
</dbReference>
<dbReference type="InterPro" id="IPR007318">
    <property type="entry name" value="Phopholipid_MeTrfase"/>
</dbReference>
<dbReference type="InterPro" id="IPR016219">
    <property type="entry name" value="Phosphatid-EA_MeTrfase_fun"/>
</dbReference>
<dbReference type="PANTHER" id="PTHR32138">
    <property type="entry name" value="PHOSPHATIDYLETHANOLAMINE N-METHYLTRANSFERASE"/>
    <property type="match status" value="1"/>
</dbReference>
<dbReference type="PANTHER" id="PTHR32138:SF0">
    <property type="entry name" value="PHOSPHATIDYLETHANOLAMINE N-METHYLTRANSFERASE"/>
    <property type="match status" value="1"/>
</dbReference>
<dbReference type="Pfam" id="PF04191">
    <property type="entry name" value="PEMT"/>
    <property type="match status" value="2"/>
</dbReference>
<dbReference type="PIRSF" id="PIRSF000383">
    <property type="entry name" value="PEAMT"/>
    <property type="match status" value="1"/>
</dbReference>
<dbReference type="PROSITE" id="PS51598">
    <property type="entry name" value="SAM_CHO2"/>
    <property type="match status" value="1"/>
</dbReference>
<keyword id="KW-0256">Endoplasmic reticulum</keyword>
<keyword id="KW-0444">Lipid biosynthesis</keyword>
<keyword id="KW-0443">Lipid metabolism</keyword>
<keyword id="KW-0472">Membrane</keyword>
<keyword id="KW-0489">Methyltransferase</keyword>
<keyword id="KW-0594">Phospholipid biosynthesis</keyword>
<keyword id="KW-1208">Phospholipid metabolism</keyword>
<keyword id="KW-1185">Reference proteome</keyword>
<keyword id="KW-0949">S-adenosyl-L-methionine</keyword>
<keyword id="KW-0808">Transferase</keyword>
<keyword id="KW-0812">Transmembrane</keyword>
<keyword id="KW-1133">Transmembrane helix</keyword>
<comment type="function">
    <text evidence="1">Catalyzes the first step of the methylation pathway of phosphatidylcholine biosynthesis, the SAM-dependent methylation of phosphatidylethanolamine (PE) to phosphatidylmonomethylethanolamine (PMME).</text>
</comment>
<comment type="catalytic activity">
    <reaction evidence="1">
        <text>a 1,2-diacyl-sn-glycero-3-phosphoethanolamine + S-adenosyl-L-methionine = a 1,2-diacyl-sn-glycero-3-phospho-N-methylethanolamine + S-adenosyl-L-homocysteine + H(+)</text>
        <dbReference type="Rhea" id="RHEA:11164"/>
        <dbReference type="ChEBI" id="CHEBI:15378"/>
        <dbReference type="ChEBI" id="CHEBI:57856"/>
        <dbReference type="ChEBI" id="CHEBI:59789"/>
        <dbReference type="ChEBI" id="CHEBI:64573"/>
        <dbReference type="ChEBI" id="CHEBI:64612"/>
        <dbReference type="EC" id="2.1.1.17"/>
    </reaction>
</comment>
<comment type="pathway">
    <text evidence="1">Phospholipid metabolism; phosphatidylcholine biosynthesis.</text>
</comment>
<comment type="subcellular location">
    <subcellularLocation>
        <location evidence="1">Endoplasmic reticulum membrane</location>
        <topology evidence="1">Multi-pass membrane protein</topology>
    </subcellularLocation>
</comment>
<comment type="similarity">
    <text evidence="1">Belongs to the class VI-like SAM-binding methyltransferase superfamily. CHO2 family.</text>
</comment>
<accession>C1GZK1</accession>